<proteinExistence type="evidence at transcript level"/>
<organism>
    <name type="scientific">Sus scrofa</name>
    <name type="common">Pig</name>
    <dbReference type="NCBI Taxonomy" id="9823"/>
    <lineage>
        <taxon>Eukaryota</taxon>
        <taxon>Metazoa</taxon>
        <taxon>Chordata</taxon>
        <taxon>Craniata</taxon>
        <taxon>Vertebrata</taxon>
        <taxon>Euteleostomi</taxon>
        <taxon>Mammalia</taxon>
        <taxon>Eutheria</taxon>
        <taxon>Laurasiatheria</taxon>
        <taxon>Artiodactyla</taxon>
        <taxon>Suina</taxon>
        <taxon>Suidae</taxon>
        <taxon>Sus</taxon>
    </lineage>
</organism>
<gene>
    <name type="primary">SEPHS2</name>
    <name type="synonym">SPS2</name>
</gene>
<feature type="initiator methionine" description="Removed" evidence="4">
    <location>
        <position position="1"/>
    </location>
</feature>
<feature type="chain" id="PRO_0000312763" description="Selenide, water dikinase 2">
    <location>
        <begin position="2"/>
        <end position="451"/>
    </location>
</feature>
<feature type="active site" evidence="5">
    <location>
        <position position="63"/>
    </location>
</feature>
<feature type="binding site" description="in other chain" evidence="2">
    <location>
        <position position="66"/>
    </location>
    <ligand>
        <name>ATP</name>
        <dbReference type="ChEBI" id="CHEBI:30616"/>
        <note>ligand shared between dimeric partners</note>
    </ligand>
</feature>
<feature type="binding site" description="in other chain" evidence="2">
    <location>
        <begin position="121"/>
        <end position="123"/>
    </location>
    <ligand>
        <name>ATP</name>
        <dbReference type="ChEBI" id="CHEBI:30616"/>
        <note>ligand shared between dimeric partners</note>
    </ligand>
</feature>
<feature type="binding site" evidence="2">
    <location>
        <position position="123"/>
    </location>
    <ligand>
        <name>Mg(2+)</name>
        <dbReference type="ChEBI" id="CHEBI:18420"/>
    </ligand>
</feature>
<feature type="binding site" description="in other chain" evidence="2">
    <location>
        <position position="141"/>
    </location>
    <ligand>
        <name>ATP</name>
        <dbReference type="ChEBI" id="CHEBI:30616"/>
        <note>ligand shared between dimeric partners</note>
    </ligand>
</feature>
<feature type="binding site" description="in other chain" evidence="2">
    <location>
        <position position="164"/>
    </location>
    <ligand>
        <name>ATP</name>
        <dbReference type="ChEBI" id="CHEBI:30616"/>
        <note>ligand shared between dimeric partners</note>
    </ligand>
</feature>
<feature type="binding site" evidence="2">
    <location>
        <position position="164"/>
    </location>
    <ligand>
        <name>Mg(2+)</name>
        <dbReference type="ChEBI" id="CHEBI:18420"/>
    </ligand>
</feature>
<feature type="binding site" evidence="2">
    <location>
        <begin position="215"/>
        <end position="218"/>
    </location>
    <ligand>
        <name>ATP</name>
        <dbReference type="ChEBI" id="CHEBI:30616"/>
        <note>ligand shared between dimeric partners</note>
    </ligand>
</feature>
<feature type="binding site" evidence="2">
    <location>
        <position position="319"/>
    </location>
    <ligand>
        <name>Mg(2+)</name>
        <dbReference type="ChEBI" id="CHEBI:18420"/>
    </ligand>
</feature>
<feature type="site" description="Important for catalytic activity" evidence="1">
    <location>
        <position position="66"/>
    </location>
</feature>
<feature type="non-standard amino acid" description="Selenocysteine">
    <location>
        <position position="63"/>
    </location>
</feature>
<feature type="modified residue" description="N-acetylalanine" evidence="4">
    <location>
        <position position="2"/>
    </location>
</feature>
<feature type="modified residue" description="Phosphoserine" evidence="3">
    <location>
        <position position="49"/>
    </location>
</feature>
<name>SPS2_PIG</name>
<reference key="1">
    <citation type="submission" date="2007-01" db="EMBL/GenBank/DDBJ databases">
        <title>The expression of SPS2 in Sus scrofa affected by dietary selenium.</title>
        <authorList>
            <person name="Zhou J.C."/>
            <person name="Zhao H."/>
            <person name="Wang K.N."/>
            <person name="Li J.G."/>
            <person name="Rocha P."/>
            <person name="Xia X.J."/>
            <person name="Lei X.G."/>
        </authorList>
    </citation>
    <scope>NUCLEOTIDE SEQUENCE [MRNA]</scope>
    <source>
        <tissue>Spleen</tissue>
    </source>
</reference>
<keyword id="KW-0007">Acetylation</keyword>
<keyword id="KW-0067">ATP-binding</keyword>
<keyword id="KW-0418">Kinase</keyword>
<keyword id="KW-0460">Magnesium</keyword>
<keyword id="KW-0479">Metal-binding</keyword>
<keyword id="KW-0547">Nucleotide-binding</keyword>
<keyword id="KW-0597">Phosphoprotein</keyword>
<keyword id="KW-1185">Reference proteome</keyword>
<keyword id="KW-0711">Selenium</keyword>
<keyword id="KW-0712">Selenocysteine</keyword>
<keyword id="KW-0808">Transferase</keyword>
<keyword id="KW-0832">Ubl conjugation</keyword>
<evidence type="ECO:0000250" key="1">
    <source>
        <dbReference type="UniProtKB" id="P16456"/>
    </source>
</evidence>
<evidence type="ECO:0000250" key="2">
    <source>
        <dbReference type="UniProtKB" id="P49903"/>
    </source>
</evidence>
<evidence type="ECO:0000250" key="3">
    <source>
        <dbReference type="UniProtKB" id="P97364"/>
    </source>
</evidence>
<evidence type="ECO:0000250" key="4">
    <source>
        <dbReference type="UniProtKB" id="Q99611"/>
    </source>
</evidence>
<evidence type="ECO:0000255" key="5"/>
<evidence type="ECO:0000305" key="6"/>
<accession>A1YIZ1</accession>
<protein>
    <recommendedName>
        <fullName>Selenide, water dikinase 2</fullName>
        <ecNumber evidence="2">2.7.9.3</ecNumber>
    </recommendedName>
    <alternativeName>
        <fullName>Selenium donor protein 2</fullName>
    </alternativeName>
    <alternativeName>
        <fullName>Selenophosphate synthase 2</fullName>
    </alternativeName>
</protein>
<comment type="function">
    <text evidence="2">Synthesizes selenophosphate from selenide and ATP.</text>
</comment>
<comment type="catalytic activity">
    <reaction evidence="2">
        <text>hydrogenselenide + ATP + H2O = selenophosphate + AMP + phosphate + 2 H(+)</text>
        <dbReference type="Rhea" id="RHEA:18737"/>
        <dbReference type="ChEBI" id="CHEBI:15377"/>
        <dbReference type="ChEBI" id="CHEBI:15378"/>
        <dbReference type="ChEBI" id="CHEBI:16144"/>
        <dbReference type="ChEBI" id="CHEBI:29317"/>
        <dbReference type="ChEBI" id="CHEBI:30616"/>
        <dbReference type="ChEBI" id="CHEBI:43474"/>
        <dbReference type="ChEBI" id="CHEBI:456215"/>
        <dbReference type="EC" id="2.7.9.3"/>
    </reaction>
</comment>
<comment type="cofactor">
    <cofactor evidence="2">
        <name>Mg(2+)</name>
        <dbReference type="ChEBI" id="CHEBI:18420"/>
    </cofactor>
    <text evidence="2">Binds 1 Mg(2+) ion per subunit.</text>
</comment>
<comment type="subunit">
    <text evidence="2">Homodimer.</text>
</comment>
<comment type="PTM">
    <text evidence="4">Truncated SEPHS2 proteins produced by failed UGA/Sec decoding are ubiquitinated by the CRL2(KLHDC3) complex, which recognizes the glycine (Gly) at the C-terminus of truncated SEPHS2 proteins.</text>
</comment>
<comment type="similarity">
    <text evidence="6">Belongs to the selenophosphate synthase 1 family. Class I subfamily.</text>
</comment>
<dbReference type="EC" id="2.7.9.3" evidence="2"/>
<dbReference type="EMBL" id="EF033624">
    <property type="protein sequence ID" value="ABM46855.1"/>
    <property type="molecule type" value="mRNA"/>
</dbReference>
<dbReference type="RefSeq" id="NP_001087204.1">
    <property type="nucleotide sequence ID" value="NM_001093735.1"/>
</dbReference>
<dbReference type="FunCoup" id="A1YIZ1">
    <property type="interactions" value="113"/>
</dbReference>
<dbReference type="PaxDb" id="9823-ENSSSCP00000008324"/>
<dbReference type="PeptideAtlas" id="A1YIZ1"/>
<dbReference type="Ensembl" id="ENSSSCT00030095354.1">
    <property type="protein sequence ID" value="ENSSSCP00030043937.1"/>
    <property type="gene ID" value="ENSSSCG00030068190.1"/>
</dbReference>
<dbReference type="Ensembl" id="ENSSSCT00035086280.1">
    <property type="protein sequence ID" value="ENSSSCP00035035935.1"/>
    <property type="gene ID" value="ENSSSCG00035064131.1"/>
</dbReference>
<dbReference type="Ensembl" id="ENSSSCT00040044154.1">
    <property type="protein sequence ID" value="ENSSSCP00040018556.1"/>
    <property type="gene ID" value="ENSSSCG00040032793.1"/>
</dbReference>
<dbReference type="Ensembl" id="ENSSSCT00055054932.1">
    <property type="protein sequence ID" value="ENSSSCP00055043833.1"/>
    <property type="gene ID" value="ENSSSCG00055027768.1"/>
</dbReference>
<dbReference type="Ensembl" id="ENSSSCT00060105907.1">
    <property type="protein sequence ID" value="ENSSSCP00060046661.1"/>
    <property type="gene ID" value="ENSSSCG00060077040.1"/>
</dbReference>
<dbReference type="Ensembl" id="ENSSSCT00085015004">
    <property type="protein sequence ID" value="ENSSSCP00085010765"/>
    <property type="gene ID" value="ENSSSCG00085007929"/>
</dbReference>
<dbReference type="Ensembl" id="ENSSSCT00110050082">
    <property type="protein sequence ID" value="ENSSSCP00110035196"/>
    <property type="gene ID" value="ENSSSCG00110026012"/>
</dbReference>
<dbReference type="Ensembl" id="ENSSSCT00115037680">
    <property type="protein sequence ID" value="ENSSSCP00115035599"/>
    <property type="gene ID" value="ENSSSCG00115021275"/>
</dbReference>
<dbReference type="GeneID" id="100037302"/>
<dbReference type="KEGG" id="ssc:100037302"/>
<dbReference type="CTD" id="22928"/>
<dbReference type="InParanoid" id="A1YIZ1"/>
<dbReference type="OrthoDB" id="409395at2759"/>
<dbReference type="Reactome" id="R-SSC-2408557">
    <property type="pathway name" value="Selenocysteine synthesis"/>
</dbReference>
<dbReference type="Proteomes" id="UP000008227">
    <property type="component" value="Unplaced"/>
</dbReference>
<dbReference type="Proteomes" id="UP000314985">
    <property type="component" value="Unplaced"/>
</dbReference>
<dbReference type="Proteomes" id="UP000694570">
    <property type="component" value="Unplaced"/>
</dbReference>
<dbReference type="Proteomes" id="UP000694571">
    <property type="component" value="Unplaced"/>
</dbReference>
<dbReference type="Proteomes" id="UP000694720">
    <property type="component" value="Unplaced"/>
</dbReference>
<dbReference type="Proteomes" id="UP000694722">
    <property type="component" value="Unplaced"/>
</dbReference>
<dbReference type="Proteomes" id="UP000694723">
    <property type="component" value="Unplaced"/>
</dbReference>
<dbReference type="Proteomes" id="UP000694724">
    <property type="component" value="Unplaced"/>
</dbReference>
<dbReference type="Proteomes" id="UP000694725">
    <property type="component" value="Unplaced"/>
</dbReference>
<dbReference type="Proteomes" id="UP000694726">
    <property type="component" value="Unplaced"/>
</dbReference>
<dbReference type="Proteomes" id="UP000694727">
    <property type="component" value="Unplaced"/>
</dbReference>
<dbReference type="Proteomes" id="UP000694728">
    <property type="component" value="Unplaced"/>
</dbReference>
<dbReference type="GO" id="GO:0005737">
    <property type="term" value="C:cytoplasm"/>
    <property type="evidence" value="ECO:0000318"/>
    <property type="project" value="GO_Central"/>
</dbReference>
<dbReference type="GO" id="GO:0005524">
    <property type="term" value="F:ATP binding"/>
    <property type="evidence" value="ECO:0007669"/>
    <property type="project" value="UniProtKB-KW"/>
</dbReference>
<dbReference type="GO" id="GO:0046872">
    <property type="term" value="F:metal ion binding"/>
    <property type="evidence" value="ECO:0007669"/>
    <property type="project" value="UniProtKB-KW"/>
</dbReference>
<dbReference type="GO" id="GO:0004756">
    <property type="term" value="F:selenide, water dikinase activity"/>
    <property type="evidence" value="ECO:0000318"/>
    <property type="project" value="GO_Central"/>
</dbReference>
<dbReference type="GO" id="GO:0016260">
    <property type="term" value="P:selenocysteine biosynthetic process"/>
    <property type="evidence" value="ECO:0000318"/>
    <property type="project" value="GO_Central"/>
</dbReference>
<dbReference type="CDD" id="cd02195">
    <property type="entry name" value="SelD"/>
    <property type="match status" value="1"/>
</dbReference>
<dbReference type="FunFam" id="3.90.650.10:FF:000003">
    <property type="entry name" value="Selenide, water dikinase 1"/>
    <property type="match status" value="1"/>
</dbReference>
<dbReference type="FunFam" id="3.30.1330.10:FF:000018">
    <property type="entry name" value="selenide, water dikinase 2"/>
    <property type="match status" value="1"/>
</dbReference>
<dbReference type="Gene3D" id="3.90.650.10">
    <property type="entry name" value="PurM-like C-terminal domain"/>
    <property type="match status" value="1"/>
</dbReference>
<dbReference type="Gene3D" id="3.30.1330.10">
    <property type="entry name" value="PurM-like, N-terminal domain"/>
    <property type="match status" value="1"/>
</dbReference>
<dbReference type="InterPro" id="IPR010918">
    <property type="entry name" value="PurM-like_C_dom"/>
</dbReference>
<dbReference type="InterPro" id="IPR036676">
    <property type="entry name" value="PurM-like_C_sf"/>
</dbReference>
<dbReference type="InterPro" id="IPR016188">
    <property type="entry name" value="PurM-like_N"/>
</dbReference>
<dbReference type="InterPro" id="IPR036921">
    <property type="entry name" value="PurM-like_N_sf"/>
</dbReference>
<dbReference type="InterPro" id="IPR004536">
    <property type="entry name" value="SPS/SelD"/>
</dbReference>
<dbReference type="NCBIfam" id="TIGR00476">
    <property type="entry name" value="selD"/>
    <property type="match status" value="1"/>
</dbReference>
<dbReference type="PANTHER" id="PTHR10256">
    <property type="entry name" value="SELENIDE, WATER DIKINASE"/>
    <property type="match status" value="1"/>
</dbReference>
<dbReference type="PANTHER" id="PTHR10256:SF1">
    <property type="entry name" value="SELENIDE, WATER DIKINASE 2"/>
    <property type="match status" value="1"/>
</dbReference>
<dbReference type="Pfam" id="PF00586">
    <property type="entry name" value="AIRS"/>
    <property type="match status" value="1"/>
</dbReference>
<dbReference type="Pfam" id="PF02769">
    <property type="entry name" value="AIRS_C"/>
    <property type="match status" value="1"/>
</dbReference>
<dbReference type="SUPFAM" id="SSF56042">
    <property type="entry name" value="PurM C-terminal domain-like"/>
    <property type="match status" value="1"/>
</dbReference>
<dbReference type="SUPFAM" id="SSF55326">
    <property type="entry name" value="PurM N-terminal domain-like"/>
    <property type="match status" value="1"/>
</dbReference>
<sequence length="451" mass="47821">MAEAAATGAGGEMMAAVAAGEGCSGPAGLSLGRGFSGYRPFEPQALGLSPSWRLTGFSGMKGUGCKVPQETLLKLLAGLTRPEVRPPVGRGLVGGLEEAAQEAGLPVRAEPSPTFPTLGIGLDSCVIPLRHGGLSLVQTTDFFYPLVEDPYMMGRIACANVLSDLYAMGITECDNMLMLLSVSQNMIEEEREKITPLMIKGFRDAAEEGGTAVTGGQTVINPWIIIGGVATVVCQPNEFIMPDSAVVGDVLVLTKPLGTQVAVNAHQWLDNPERWNKIKMVVSREEVELAYQEAMFNMATLNRTAAGLMHTFNAHAATDITGFGILGHSQNLAKQQRNEVSFVIHNLPIIAKMAAISKASGRFGLLQGTSAETSGGLLICLPREQAARFCSEIKSSKYGEGHQAWIVGIVEKGNRTARIIDKPRVIEVLPRGTAATALAPENSSASSEPSL</sequence>